<comment type="function">
    <text evidence="1">Catalyzes the conversion of (8S)-3',8-cyclo-7,8-dihydroguanosine 5'-triphosphate to cyclic pyranopterin monophosphate (cPMP).</text>
</comment>
<comment type="catalytic activity">
    <reaction evidence="1">
        <text>(8S)-3',8-cyclo-7,8-dihydroguanosine 5'-triphosphate = cyclic pyranopterin phosphate + diphosphate</text>
        <dbReference type="Rhea" id="RHEA:49580"/>
        <dbReference type="ChEBI" id="CHEBI:33019"/>
        <dbReference type="ChEBI" id="CHEBI:59648"/>
        <dbReference type="ChEBI" id="CHEBI:131766"/>
        <dbReference type="EC" id="4.6.1.17"/>
    </reaction>
</comment>
<comment type="pathway">
    <text evidence="1">Cofactor biosynthesis; molybdopterin biosynthesis.</text>
</comment>
<comment type="subunit">
    <text evidence="1">Homohexamer; trimer of dimers.</text>
</comment>
<comment type="similarity">
    <text evidence="1">Belongs to the MoaC family.</text>
</comment>
<keyword id="KW-0456">Lyase</keyword>
<keyword id="KW-0501">Molybdenum cofactor biosynthesis</keyword>
<evidence type="ECO:0000255" key="1">
    <source>
        <dbReference type="HAMAP-Rule" id="MF_01224"/>
    </source>
</evidence>
<sequence length="162" mass="17081">MSGLTHFDAAGHAHMVDVGGKQETQRVAVARGTIRMLPATFALIRDGKAKKGDVLGVARIAAIQGAKRTADLIPLCHPLALTRVAVDFELDDALPGVHCVAQVETFGRTGVEMEALTAVQVGLLTVYDMCKAVDRGMVITDVSVREKRGGKSGDWTAEDAAG</sequence>
<protein>
    <recommendedName>
        <fullName evidence="1">Cyclic pyranopterin monophosphate synthase</fullName>
        <ecNumber evidence="1">4.6.1.17</ecNumber>
    </recommendedName>
    <alternativeName>
        <fullName evidence="1">Molybdenum cofactor biosynthesis protein C</fullName>
    </alternativeName>
</protein>
<proteinExistence type="inferred from homology"/>
<feature type="chain" id="PRO_1000054079" description="Cyclic pyranopterin monophosphate synthase">
    <location>
        <begin position="1"/>
        <end position="162"/>
    </location>
</feature>
<feature type="active site" evidence="1">
    <location>
        <position position="128"/>
    </location>
</feature>
<feature type="binding site" evidence="1">
    <location>
        <begin position="75"/>
        <end position="77"/>
    </location>
    <ligand>
        <name>substrate</name>
    </ligand>
</feature>
<feature type="binding site" evidence="1">
    <location>
        <begin position="113"/>
        <end position="114"/>
    </location>
    <ligand>
        <name>substrate</name>
    </ligand>
</feature>
<name>MOAC_BURVG</name>
<accession>A4JHJ1</accession>
<dbReference type="EC" id="4.6.1.17" evidence="1"/>
<dbReference type="EMBL" id="CP000614">
    <property type="protein sequence ID" value="ABO55744.1"/>
    <property type="molecule type" value="Genomic_DNA"/>
</dbReference>
<dbReference type="SMR" id="A4JHJ1"/>
<dbReference type="KEGG" id="bvi:Bcep1808_2753"/>
<dbReference type="eggNOG" id="COG0315">
    <property type="taxonomic scope" value="Bacteria"/>
</dbReference>
<dbReference type="HOGENOM" id="CLU_074693_1_1_4"/>
<dbReference type="UniPathway" id="UPA00344"/>
<dbReference type="Proteomes" id="UP000002287">
    <property type="component" value="Chromosome 1"/>
</dbReference>
<dbReference type="GO" id="GO:0061799">
    <property type="term" value="F:cyclic pyranopterin monophosphate synthase activity"/>
    <property type="evidence" value="ECO:0007669"/>
    <property type="project" value="UniProtKB-UniRule"/>
</dbReference>
<dbReference type="GO" id="GO:0006777">
    <property type="term" value="P:Mo-molybdopterin cofactor biosynthetic process"/>
    <property type="evidence" value="ECO:0007669"/>
    <property type="project" value="UniProtKB-UniRule"/>
</dbReference>
<dbReference type="CDD" id="cd01420">
    <property type="entry name" value="MoaC_PE"/>
    <property type="match status" value="1"/>
</dbReference>
<dbReference type="Gene3D" id="3.30.70.640">
    <property type="entry name" value="Molybdopterin cofactor biosynthesis C (MoaC) domain"/>
    <property type="match status" value="1"/>
</dbReference>
<dbReference type="HAMAP" id="MF_01224_B">
    <property type="entry name" value="MoaC_B"/>
    <property type="match status" value="1"/>
</dbReference>
<dbReference type="InterPro" id="IPR023045">
    <property type="entry name" value="MoaC"/>
</dbReference>
<dbReference type="InterPro" id="IPR047594">
    <property type="entry name" value="MoaC_bact/euk"/>
</dbReference>
<dbReference type="InterPro" id="IPR036522">
    <property type="entry name" value="MoaC_sf"/>
</dbReference>
<dbReference type="InterPro" id="IPR050105">
    <property type="entry name" value="MoCo_biosynth_MoaA/MoaC"/>
</dbReference>
<dbReference type="InterPro" id="IPR002820">
    <property type="entry name" value="Mopterin_CF_biosynth-C_dom"/>
</dbReference>
<dbReference type="NCBIfam" id="TIGR00581">
    <property type="entry name" value="moaC"/>
    <property type="match status" value="1"/>
</dbReference>
<dbReference type="NCBIfam" id="NF006870">
    <property type="entry name" value="PRK09364.1"/>
    <property type="match status" value="1"/>
</dbReference>
<dbReference type="PANTHER" id="PTHR22960:SF29">
    <property type="entry name" value="CYCLIC PYRANOPTERIN MONOPHOSPHATE SYNTHASE"/>
    <property type="match status" value="1"/>
</dbReference>
<dbReference type="PANTHER" id="PTHR22960">
    <property type="entry name" value="MOLYBDOPTERIN COFACTOR SYNTHESIS PROTEIN A"/>
    <property type="match status" value="1"/>
</dbReference>
<dbReference type="Pfam" id="PF01967">
    <property type="entry name" value="MoaC"/>
    <property type="match status" value="1"/>
</dbReference>
<dbReference type="SUPFAM" id="SSF55040">
    <property type="entry name" value="Molybdenum cofactor biosynthesis protein C, MoaC"/>
    <property type="match status" value="1"/>
</dbReference>
<gene>
    <name evidence="1" type="primary">moaC</name>
    <name type="ordered locus">Bcep1808_2753</name>
</gene>
<organism>
    <name type="scientific">Burkholderia vietnamiensis (strain G4 / LMG 22486)</name>
    <name type="common">Burkholderia cepacia (strain R1808)</name>
    <dbReference type="NCBI Taxonomy" id="269482"/>
    <lineage>
        <taxon>Bacteria</taxon>
        <taxon>Pseudomonadati</taxon>
        <taxon>Pseudomonadota</taxon>
        <taxon>Betaproteobacteria</taxon>
        <taxon>Burkholderiales</taxon>
        <taxon>Burkholderiaceae</taxon>
        <taxon>Burkholderia</taxon>
        <taxon>Burkholderia cepacia complex</taxon>
    </lineage>
</organism>
<reference key="1">
    <citation type="submission" date="2007-03" db="EMBL/GenBank/DDBJ databases">
        <title>Complete sequence of chromosome 1 of Burkholderia vietnamiensis G4.</title>
        <authorList>
            <consortium name="US DOE Joint Genome Institute"/>
            <person name="Copeland A."/>
            <person name="Lucas S."/>
            <person name="Lapidus A."/>
            <person name="Barry K."/>
            <person name="Detter J.C."/>
            <person name="Glavina del Rio T."/>
            <person name="Hammon N."/>
            <person name="Israni S."/>
            <person name="Dalin E."/>
            <person name="Tice H."/>
            <person name="Pitluck S."/>
            <person name="Chain P."/>
            <person name="Malfatti S."/>
            <person name="Shin M."/>
            <person name="Vergez L."/>
            <person name="Schmutz J."/>
            <person name="Larimer F."/>
            <person name="Land M."/>
            <person name="Hauser L."/>
            <person name="Kyrpides N."/>
            <person name="Tiedje J."/>
            <person name="Richardson P."/>
        </authorList>
    </citation>
    <scope>NUCLEOTIDE SEQUENCE [LARGE SCALE GENOMIC DNA]</scope>
    <source>
        <strain>G4 / LMG 22486</strain>
    </source>
</reference>